<keyword id="KW-0997">Cell inner membrane</keyword>
<keyword id="KW-1003">Cell membrane</keyword>
<keyword id="KW-0472">Membrane</keyword>
<keyword id="KW-1185">Reference proteome</keyword>
<keyword id="KW-0812">Transmembrane</keyword>
<keyword id="KW-1133">Transmembrane helix</keyword>
<keyword id="KW-0813">Transport</keyword>
<sequence length="310" mass="34733">MKTLIRKFSRTAITVVLVILAFIAIFNAWVYYTESPWTRDARFSADVVAIAPDVSGLITQVNVHDNQLVKKGQILFTIDQPRYQKALEEAQADVAYYQVLAQEKRQEAGRRNRLGVQAMSREEIDQANNVLQTVLHQLAKAQATRDLAKLDLERTVIRAPADGWVTNLNVYTGEFITRGSTAVALVKQNSFYVLAYMEETKLEGGRPGYRAEITPLGSNKVLKGTVDSVAAGVTNASSTRDDKGMATIDSNLEWVRLAQRVPVRIRLDNQQENIWPAGTTATVVVTGKQDRDESQDSFFRKMAHRLREFG</sequence>
<reference key="1">
    <citation type="journal article" date="2005" name="Nucleic Acids Res.">
        <title>Genome dynamics and diversity of Shigella species, the etiologic agents of bacillary dysentery.</title>
        <authorList>
            <person name="Yang F."/>
            <person name="Yang J."/>
            <person name="Zhang X."/>
            <person name="Chen L."/>
            <person name="Jiang Y."/>
            <person name="Yan Y."/>
            <person name="Tang X."/>
            <person name="Wang J."/>
            <person name="Xiong Z."/>
            <person name="Dong J."/>
            <person name="Xue Y."/>
            <person name="Zhu Y."/>
            <person name="Xu X."/>
            <person name="Sun L."/>
            <person name="Chen S."/>
            <person name="Nie H."/>
            <person name="Peng J."/>
            <person name="Xu J."/>
            <person name="Wang Y."/>
            <person name="Yuan Z."/>
            <person name="Wen Y."/>
            <person name="Yao Z."/>
            <person name="Shen Y."/>
            <person name="Qiang B."/>
            <person name="Hou Y."/>
            <person name="Yu J."/>
            <person name="Jin Q."/>
        </authorList>
    </citation>
    <scope>NUCLEOTIDE SEQUENCE [LARGE SCALE GENOMIC DNA]</scope>
    <source>
        <strain>Ss046</strain>
    </source>
</reference>
<name>AAEA_SHISS</name>
<gene>
    <name evidence="1" type="primary">aaeA</name>
    <name type="ordered locus">SSON_3383</name>
</gene>
<accession>Q3YX06</accession>
<organism>
    <name type="scientific">Shigella sonnei (strain Ss046)</name>
    <dbReference type="NCBI Taxonomy" id="300269"/>
    <lineage>
        <taxon>Bacteria</taxon>
        <taxon>Pseudomonadati</taxon>
        <taxon>Pseudomonadota</taxon>
        <taxon>Gammaproteobacteria</taxon>
        <taxon>Enterobacterales</taxon>
        <taxon>Enterobacteriaceae</taxon>
        <taxon>Shigella</taxon>
    </lineage>
</organism>
<dbReference type="EMBL" id="CP000038">
    <property type="protein sequence ID" value="AAZ89956.1"/>
    <property type="molecule type" value="Genomic_DNA"/>
</dbReference>
<dbReference type="RefSeq" id="WP_000854018.1">
    <property type="nucleotide sequence ID" value="NC_007384.1"/>
</dbReference>
<dbReference type="SMR" id="Q3YX06"/>
<dbReference type="GeneID" id="93778744"/>
<dbReference type="KEGG" id="ssn:SSON_3383"/>
<dbReference type="HOGENOM" id="CLU_018816_15_2_6"/>
<dbReference type="Proteomes" id="UP000002529">
    <property type="component" value="Chromosome"/>
</dbReference>
<dbReference type="GO" id="GO:0005886">
    <property type="term" value="C:plasma membrane"/>
    <property type="evidence" value="ECO:0007669"/>
    <property type="project" value="UniProtKB-SubCell"/>
</dbReference>
<dbReference type="GO" id="GO:0022857">
    <property type="term" value="F:transmembrane transporter activity"/>
    <property type="evidence" value="ECO:0007669"/>
    <property type="project" value="UniProtKB-UniRule"/>
</dbReference>
<dbReference type="FunFam" id="2.40.30.170:FF:000002">
    <property type="entry name" value="p-hydroxybenzoic acid efflux pump subunit AaeA"/>
    <property type="match status" value="1"/>
</dbReference>
<dbReference type="FunFam" id="2.40.50.100:FF:000018">
    <property type="entry name" value="p-hydroxybenzoic acid efflux pump subunit AaeA"/>
    <property type="match status" value="1"/>
</dbReference>
<dbReference type="Gene3D" id="2.40.30.170">
    <property type="match status" value="1"/>
</dbReference>
<dbReference type="Gene3D" id="2.40.50.100">
    <property type="match status" value="1"/>
</dbReference>
<dbReference type="Gene3D" id="1.10.287.470">
    <property type="entry name" value="Helix hairpin bin"/>
    <property type="match status" value="1"/>
</dbReference>
<dbReference type="HAMAP" id="MF_01544">
    <property type="entry name" value="AaeA"/>
    <property type="match status" value="1"/>
</dbReference>
<dbReference type="InterPro" id="IPR043602">
    <property type="entry name" value="CusB-like_dom_1"/>
</dbReference>
<dbReference type="InterPro" id="IPR032317">
    <property type="entry name" value="CusB_D23"/>
</dbReference>
<dbReference type="InterPro" id="IPR050393">
    <property type="entry name" value="MFP_Efflux_Pump"/>
</dbReference>
<dbReference type="InterPro" id="IPR022871">
    <property type="entry name" value="PHBA_efflux_pump_AaeA"/>
</dbReference>
<dbReference type="InterPro" id="IPR006143">
    <property type="entry name" value="RND_pump_MFP"/>
</dbReference>
<dbReference type="NCBIfam" id="NF007850">
    <property type="entry name" value="PRK10559.1"/>
    <property type="match status" value="1"/>
</dbReference>
<dbReference type="NCBIfam" id="TIGR01730">
    <property type="entry name" value="RND_mfp"/>
    <property type="match status" value="1"/>
</dbReference>
<dbReference type="PANTHER" id="PTHR30367:SF12">
    <property type="entry name" value="P-HYDROXYBENZOIC ACID EFFLUX PUMP SUBUNIT AAEA"/>
    <property type="match status" value="1"/>
</dbReference>
<dbReference type="PANTHER" id="PTHR30367">
    <property type="entry name" value="P-HYDROXYBENZOIC ACID EFFLUX PUMP SUBUNIT AAEA-RELATED"/>
    <property type="match status" value="1"/>
</dbReference>
<dbReference type="Pfam" id="PF00529">
    <property type="entry name" value="CusB_dom_1"/>
    <property type="match status" value="1"/>
</dbReference>
<dbReference type="Pfam" id="PF16576">
    <property type="entry name" value="HlyD_D23"/>
    <property type="match status" value="1"/>
</dbReference>
<dbReference type="SUPFAM" id="SSF111369">
    <property type="entry name" value="HlyD-like secretion proteins"/>
    <property type="match status" value="1"/>
</dbReference>
<feature type="chain" id="PRO_0000300557" description="p-hydroxybenzoic acid efflux pump subunit AaeA">
    <location>
        <begin position="1"/>
        <end position="310"/>
    </location>
</feature>
<feature type="transmembrane region" description="Helical" evidence="1">
    <location>
        <begin position="12"/>
        <end position="32"/>
    </location>
</feature>
<evidence type="ECO:0000255" key="1">
    <source>
        <dbReference type="HAMAP-Rule" id="MF_01544"/>
    </source>
</evidence>
<protein>
    <recommendedName>
        <fullName evidence="1">p-hydroxybenzoic acid efflux pump subunit AaeA</fullName>
        <shortName evidence="1">pHBA efflux pump protein A</shortName>
    </recommendedName>
</protein>
<comment type="function">
    <text evidence="1">Forms an efflux pump with AaeB.</text>
</comment>
<comment type="subcellular location">
    <subcellularLocation>
        <location evidence="1">Cell inner membrane</location>
        <topology evidence="1">Single-pass membrane protein</topology>
    </subcellularLocation>
</comment>
<comment type="similarity">
    <text evidence="1">Belongs to the membrane fusion protein (MFP) (TC 8.A.1) family.</text>
</comment>
<proteinExistence type="inferred from homology"/>